<keyword id="KW-0002">3D-structure</keyword>
<keyword id="KW-0963">Cytoplasm</keyword>
<keyword id="KW-0271">Exosome</keyword>
<keyword id="KW-1185">Reference proteome</keyword>
<keyword id="KW-0694">RNA-binding</keyword>
<accession>Q9YC02</accession>
<name>RRP4_AERPE</name>
<dbReference type="EMBL" id="BA000002">
    <property type="protein sequence ID" value="BAA80446.1"/>
    <property type="molecule type" value="Genomic_DNA"/>
</dbReference>
<dbReference type="PIR" id="H72623">
    <property type="entry name" value="H72623"/>
</dbReference>
<dbReference type="RefSeq" id="WP_010866377.1">
    <property type="nucleotide sequence ID" value="NC_000854.2"/>
</dbReference>
<dbReference type="PDB" id="2Z0S">
    <property type="method" value="X-ray"/>
    <property type="resolution" value="3.20 A"/>
    <property type="chains" value="A=1-235"/>
</dbReference>
<dbReference type="PDBsum" id="2Z0S"/>
<dbReference type="SMR" id="Q9YC02"/>
<dbReference type="STRING" id="272557.APE_1448"/>
<dbReference type="EnsemblBacteria" id="BAA80446">
    <property type="protein sequence ID" value="BAA80446"/>
    <property type="gene ID" value="APE_1448"/>
</dbReference>
<dbReference type="GeneID" id="1446022"/>
<dbReference type="KEGG" id="ape:APE_1448"/>
<dbReference type="eggNOG" id="arCOG00678">
    <property type="taxonomic scope" value="Archaea"/>
</dbReference>
<dbReference type="EvolutionaryTrace" id="Q9YC02"/>
<dbReference type="Proteomes" id="UP000002518">
    <property type="component" value="Chromosome"/>
</dbReference>
<dbReference type="GO" id="GO:0005737">
    <property type="term" value="C:cytoplasm"/>
    <property type="evidence" value="ECO:0007669"/>
    <property type="project" value="UniProtKB-SubCell"/>
</dbReference>
<dbReference type="GO" id="GO:0000178">
    <property type="term" value="C:exosome (RNase complex)"/>
    <property type="evidence" value="ECO:0007669"/>
    <property type="project" value="UniProtKB-KW"/>
</dbReference>
<dbReference type="GO" id="GO:0008143">
    <property type="term" value="F:poly(A) binding"/>
    <property type="evidence" value="ECO:0007669"/>
    <property type="project" value="InterPro"/>
</dbReference>
<dbReference type="GO" id="GO:0071034">
    <property type="term" value="P:CUT catabolic process"/>
    <property type="evidence" value="ECO:0007669"/>
    <property type="project" value="TreeGrafter"/>
</dbReference>
<dbReference type="GO" id="GO:0000467">
    <property type="term" value="P:exonucleolytic trimming to generate mature 3'-end of 5.8S rRNA from tricistronic rRNA transcript (SSU-rRNA, 5.8S rRNA, LSU-rRNA)"/>
    <property type="evidence" value="ECO:0007669"/>
    <property type="project" value="TreeGrafter"/>
</dbReference>
<dbReference type="GO" id="GO:0071051">
    <property type="term" value="P:poly(A)-dependent snoRNA 3'-end processing"/>
    <property type="evidence" value="ECO:0007669"/>
    <property type="project" value="TreeGrafter"/>
</dbReference>
<dbReference type="GO" id="GO:0006401">
    <property type="term" value="P:RNA catabolic process"/>
    <property type="evidence" value="ECO:0007669"/>
    <property type="project" value="UniProtKB-UniRule"/>
</dbReference>
<dbReference type="GO" id="GO:0034475">
    <property type="term" value="P:U4 snRNA 3'-end processing"/>
    <property type="evidence" value="ECO:0007669"/>
    <property type="project" value="TreeGrafter"/>
</dbReference>
<dbReference type="CDD" id="cd22524">
    <property type="entry name" value="KH-I_Rrp4_prokar"/>
    <property type="match status" value="1"/>
</dbReference>
<dbReference type="CDD" id="cd05789">
    <property type="entry name" value="S1_Rrp4"/>
    <property type="match status" value="1"/>
</dbReference>
<dbReference type="Gene3D" id="3.30.1370.10">
    <property type="entry name" value="K Homology domain, type 1"/>
    <property type="match status" value="1"/>
</dbReference>
<dbReference type="Gene3D" id="2.40.50.140">
    <property type="entry name" value="Nucleic acid-binding proteins"/>
    <property type="match status" value="1"/>
</dbReference>
<dbReference type="HAMAP" id="MF_00623">
    <property type="entry name" value="Exosome_Rrp4"/>
    <property type="match status" value="1"/>
</dbReference>
<dbReference type="InterPro" id="IPR026699">
    <property type="entry name" value="Exosome_RNA_bind1/RRP40/RRP4"/>
</dbReference>
<dbReference type="InterPro" id="IPR004087">
    <property type="entry name" value="KH_dom"/>
</dbReference>
<dbReference type="InterPro" id="IPR004088">
    <property type="entry name" value="KH_dom_type_1"/>
</dbReference>
<dbReference type="InterPro" id="IPR036612">
    <property type="entry name" value="KH_dom_type_1_sf"/>
</dbReference>
<dbReference type="InterPro" id="IPR012340">
    <property type="entry name" value="NA-bd_OB-fold"/>
</dbReference>
<dbReference type="InterPro" id="IPR023474">
    <property type="entry name" value="Rrp4"/>
</dbReference>
<dbReference type="InterPro" id="IPR048565">
    <property type="entry name" value="RRP4_S1"/>
</dbReference>
<dbReference type="InterPro" id="IPR003029">
    <property type="entry name" value="S1_domain"/>
</dbReference>
<dbReference type="NCBIfam" id="NF003181">
    <property type="entry name" value="PRK04163.1-1"/>
    <property type="match status" value="1"/>
</dbReference>
<dbReference type="PANTHER" id="PTHR21321:SF4">
    <property type="entry name" value="EXOSOME COMPLEX COMPONENT RRP4"/>
    <property type="match status" value="1"/>
</dbReference>
<dbReference type="PANTHER" id="PTHR21321">
    <property type="entry name" value="PNAS-3 RELATED"/>
    <property type="match status" value="1"/>
</dbReference>
<dbReference type="Pfam" id="PF15985">
    <property type="entry name" value="KH_6"/>
    <property type="match status" value="1"/>
</dbReference>
<dbReference type="Pfam" id="PF21266">
    <property type="entry name" value="RRP4_S1"/>
    <property type="match status" value="1"/>
</dbReference>
<dbReference type="SMART" id="SM00322">
    <property type="entry name" value="KH"/>
    <property type="match status" value="1"/>
</dbReference>
<dbReference type="SMART" id="SM00316">
    <property type="entry name" value="S1"/>
    <property type="match status" value="1"/>
</dbReference>
<dbReference type="SUPFAM" id="SSF54791">
    <property type="entry name" value="Eukaryotic type KH-domain (KH-domain type I)"/>
    <property type="match status" value="1"/>
</dbReference>
<dbReference type="SUPFAM" id="SSF50249">
    <property type="entry name" value="Nucleic acid-binding proteins"/>
    <property type="match status" value="1"/>
</dbReference>
<dbReference type="PROSITE" id="PS50126">
    <property type="entry name" value="S1"/>
    <property type="match status" value="1"/>
</dbReference>
<gene>
    <name evidence="1" type="primary">rrp4</name>
    <name type="ordered locus">APE_1448</name>
</gene>
<feature type="chain" id="PRO_0000050144" description="Exosome complex component Rrp4">
    <location>
        <begin position="1"/>
        <end position="235"/>
    </location>
</feature>
<feature type="domain" description="S1 motif" evidence="1">
    <location>
        <begin position="67"/>
        <end position="139"/>
    </location>
</feature>
<feature type="domain" description="KH" evidence="1">
    <location>
        <begin position="149"/>
        <end position="205"/>
    </location>
</feature>
<feature type="strand" evidence="2">
    <location>
        <begin position="70"/>
        <end position="77"/>
    </location>
</feature>
<feature type="strand" evidence="2">
    <location>
        <begin position="79"/>
        <end position="85"/>
    </location>
</feature>
<feature type="strand" evidence="2">
    <location>
        <begin position="87"/>
        <end position="90"/>
    </location>
</feature>
<feature type="strand" evidence="2">
    <location>
        <begin position="92"/>
        <end position="95"/>
    </location>
</feature>
<feature type="helix" evidence="2">
    <location>
        <begin position="96"/>
        <end position="100"/>
    </location>
</feature>
<feature type="turn" evidence="2">
    <location>
        <begin position="106"/>
        <end position="109"/>
    </location>
</feature>
<feature type="strand" evidence="2">
    <location>
        <begin position="120"/>
        <end position="128"/>
    </location>
</feature>
<feature type="strand" evidence="2">
    <location>
        <begin position="134"/>
        <end position="137"/>
    </location>
</feature>
<feature type="strand" evidence="2">
    <location>
        <begin position="140"/>
        <end position="142"/>
    </location>
</feature>
<feature type="strand" evidence="2">
    <location>
        <begin position="148"/>
        <end position="153"/>
    </location>
</feature>
<feature type="helix" evidence="2">
    <location>
        <begin position="156"/>
        <end position="158"/>
    </location>
</feature>
<feature type="helix" evidence="2">
    <location>
        <begin position="160"/>
        <end position="162"/>
    </location>
</feature>
<feature type="helix" evidence="2">
    <location>
        <begin position="165"/>
        <end position="167"/>
    </location>
</feature>
<feature type="helix" evidence="2">
    <location>
        <begin position="168"/>
        <end position="177"/>
    </location>
</feature>
<feature type="strand" evidence="2">
    <location>
        <begin position="180"/>
        <end position="184"/>
    </location>
</feature>
<feature type="turn" evidence="2">
    <location>
        <begin position="185"/>
        <end position="187"/>
    </location>
</feature>
<feature type="strand" evidence="2">
    <location>
        <begin position="188"/>
        <end position="192"/>
    </location>
</feature>
<feature type="helix" evidence="2">
    <location>
        <begin position="196"/>
        <end position="211"/>
    </location>
</feature>
<feature type="helix" evidence="2">
    <location>
        <begin position="219"/>
        <end position="232"/>
    </location>
</feature>
<protein>
    <recommendedName>
        <fullName evidence="1">Exosome complex component Rrp4</fullName>
    </recommendedName>
</protein>
<organism>
    <name type="scientific">Aeropyrum pernix (strain ATCC 700893 / DSM 11879 / JCM 9820 / NBRC 100138 / K1)</name>
    <dbReference type="NCBI Taxonomy" id="272557"/>
    <lineage>
        <taxon>Archaea</taxon>
        <taxon>Thermoproteota</taxon>
        <taxon>Thermoprotei</taxon>
        <taxon>Desulfurococcales</taxon>
        <taxon>Desulfurococcaceae</taxon>
        <taxon>Aeropyrum</taxon>
    </lineage>
</organism>
<reference key="1">
    <citation type="journal article" date="1999" name="DNA Res.">
        <title>Complete genome sequence of an aerobic hyper-thermophilic crenarchaeon, Aeropyrum pernix K1.</title>
        <authorList>
            <person name="Kawarabayasi Y."/>
            <person name="Hino Y."/>
            <person name="Horikawa H."/>
            <person name="Yamazaki S."/>
            <person name="Haikawa Y."/>
            <person name="Jin-no K."/>
            <person name="Takahashi M."/>
            <person name="Sekine M."/>
            <person name="Baba S."/>
            <person name="Ankai A."/>
            <person name="Kosugi H."/>
            <person name="Hosoyama A."/>
            <person name="Fukui S."/>
            <person name="Nagai Y."/>
            <person name="Nishijima K."/>
            <person name="Nakazawa H."/>
            <person name="Takamiya M."/>
            <person name="Masuda S."/>
            <person name="Funahashi T."/>
            <person name="Tanaka T."/>
            <person name="Kudoh Y."/>
            <person name="Yamazaki J."/>
            <person name="Kushida N."/>
            <person name="Oguchi A."/>
            <person name="Aoki K."/>
            <person name="Kubota K."/>
            <person name="Nakamura Y."/>
            <person name="Nomura N."/>
            <person name="Sako Y."/>
            <person name="Kikuchi H."/>
        </authorList>
    </citation>
    <scope>NUCLEOTIDE SEQUENCE [LARGE SCALE GENOMIC DNA]</scope>
    <source>
        <strain>ATCC 700893 / DSM 11879 / JCM 9820 / NBRC 100138 / K1</strain>
    </source>
</reference>
<reference key="2">
    <citation type="submission" date="2007-05" db="PDB data bank">
        <title>Crystal structure of putative exosome complex RNA-binding protein.</title>
        <authorList>
            <person name="Murayama K."/>
            <person name="Kato-Murayama M."/>
            <person name="Takemoto C."/>
            <person name="Terada T."/>
            <person name="Shirouzu M."/>
            <person name="Yokoyama S."/>
        </authorList>
    </citation>
    <scope>X-RAY CRYSTALLOGRAPHY (3.20 ANGSTROMS)</scope>
</reference>
<proteinExistence type="evidence at protein level"/>
<sequence>MSSERQLAGRIVVPGEPLPEEVEASPPYVIDYKGVKRATVVGLLREKGDGGGRAFVKLKEIYVPQAGDVVIGLIQSVGIMNWFVDINSPYVAVLSVQDFLGRPFNPAVDDMQSLLKVGDYIKAKVVAFDKTRSPLLTVQGEGLGRIVRGKIVEISPAKVPRVIGRKMSMLKTLEEKTECKIFVARNGRIHLECPNEDLEAIAVMAIKIIDEEAYTSGLTKRIIKFIEEERRIREV</sequence>
<evidence type="ECO:0000255" key="1">
    <source>
        <dbReference type="HAMAP-Rule" id="MF_00623"/>
    </source>
</evidence>
<evidence type="ECO:0007829" key="2">
    <source>
        <dbReference type="PDB" id="2Z0S"/>
    </source>
</evidence>
<comment type="function">
    <text evidence="1">Non-catalytic component of the exosome, which is a complex involved in RNA degradation. Increases the RNA binding and the efficiency of RNA degradation. Confers strong poly(A) specificity to the exosome.</text>
</comment>
<comment type="subunit">
    <text evidence="1">Component of the archaeal exosome complex. Forms a trimer of Rrp4 and/or Csl4 subunits. The trimer associates with a hexameric ring-like arrangement composed of 3 Rrp41-Rrp42 heterodimers.</text>
</comment>
<comment type="subcellular location">
    <subcellularLocation>
        <location evidence="1">Cytoplasm</location>
    </subcellularLocation>
</comment>
<comment type="similarity">
    <text evidence="1">Belongs to the RRP4 family.</text>
</comment>